<sequence length="144" mass="16092">MLDAQQIKEIIPHRYPFLLVDRVTEVEEGKRAAGYKNVTVNEEFFNGHFPDYPVMPGVLIVEALAQVGAVALLMKEENRGRLAFFAGIDSCRFKKQVKPGDQLHLELEVLRFRGSIGKGKGVAKVDGEVVCEAELMFSLGEKQE</sequence>
<reference key="1">
    <citation type="journal article" date="2004" name="J. Mol. Microbiol. Biotechnol.">
        <title>The complete genome sequence of Bacillus licheniformis DSM13, an organism with great industrial potential.</title>
        <authorList>
            <person name="Veith B."/>
            <person name="Herzberg C."/>
            <person name="Steckel S."/>
            <person name="Feesche J."/>
            <person name="Maurer K.H."/>
            <person name="Ehrenreich P."/>
            <person name="Baeumer S."/>
            <person name="Henne A."/>
            <person name="Liesegang H."/>
            <person name="Merkl R."/>
            <person name="Ehrenreich A."/>
            <person name="Gottschalk G."/>
        </authorList>
    </citation>
    <scope>NUCLEOTIDE SEQUENCE [LARGE SCALE GENOMIC DNA]</scope>
    <source>
        <strain>ATCC 14580 / DSM 13 / JCM 2505 / CCUG 7422 / NBRC 12200 / NCIMB 9375 / NCTC 10341 / NRRL NRS-1264 / Gibson 46</strain>
    </source>
</reference>
<reference key="2">
    <citation type="journal article" date="2004" name="Genome Biol.">
        <title>Complete genome sequence of the industrial bacterium Bacillus licheniformis and comparisons with closely related Bacillus species.</title>
        <authorList>
            <person name="Rey M.W."/>
            <person name="Ramaiya P."/>
            <person name="Nelson B.A."/>
            <person name="Brody-Karpin S.D."/>
            <person name="Zaretsky E.J."/>
            <person name="Tang M."/>
            <person name="Lopez de Leon A."/>
            <person name="Xiang H."/>
            <person name="Gusti V."/>
            <person name="Clausen I.G."/>
            <person name="Olsen P.B."/>
            <person name="Rasmussen M.D."/>
            <person name="Andersen J.T."/>
            <person name="Joergensen P.L."/>
            <person name="Larsen T.S."/>
            <person name="Sorokin A."/>
            <person name="Bolotin A."/>
            <person name="Lapidus A."/>
            <person name="Galleron N."/>
            <person name="Ehrlich S.D."/>
            <person name="Berka R.M."/>
        </authorList>
    </citation>
    <scope>NUCLEOTIDE SEQUENCE [LARGE SCALE GENOMIC DNA]</scope>
    <source>
        <strain>ATCC 14580 / DSM 13 / JCM 2505 / CCUG 7422 / NBRC 12200 / NCIMB 9375 / NCTC 10341 / NRRL NRS-1264 / Gibson 46</strain>
    </source>
</reference>
<name>FABZ_BACLD</name>
<protein>
    <recommendedName>
        <fullName evidence="1">3-hydroxyacyl-[acyl-carrier-protein] dehydratase FabZ</fullName>
        <ecNumber evidence="1">4.2.1.59</ecNumber>
    </recommendedName>
    <alternativeName>
        <fullName evidence="1">(3R)-hydroxymyristoyl-[acyl-carrier-protein] dehydratase</fullName>
        <shortName evidence="1">(3R)-hydroxymyristoyl-ACP dehydrase</shortName>
    </alternativeName>
    <alternativeName>
        <fullName evidence="1">Beta-hydroxyacyl-ACP dehydratase</fullName>
    </alternativeName>
</protein>
<organism>
    <name type="scientific">Bacillus licheniformis (strain ATCC 14580 / DSM 13 / JCM 2505 / CCUG 7422 / NBRC 12200 / NCIMB 9375 / NCTC 10341 / NRRL NRS-1264 / Gibson 46)</name>
    <dbReference type="NCBI Taxonomy" id="279010"/>
    <lineage>
        <taxon>Bacteria</taxon>
        <taxon>Bacillati</taxon>
        <taxon>Bacillota</taxon>
        <taxon>Bacilli</taxon>
        <taxon>Bacillales</taxon>
        <taxon>Bacillaceae</taxon>
        <taxon>Bacillus</taxon>
    </lineage>
</organism>
<evidence type="ECO:0000255" key="1">
    <source>
        <dbReference type="HAMAP-Rule" id="MF_00406"/>
    </source>
</evidence>
<accession>Q65E26</accession>
<accession>Q62PJ8</accession>
<gene>
    <name evidence="1" type="primary">fabZ</name>
    <name type="ordered locus">BLi03873</name>
    <name type="ordered locus">BL02496</name>
</gene>
<comment type="function">
    <text evidence="1">Involved in unsaturated fatty acids biosynthesis. Catalyzes the dehydration of short chain beta-hydroxyacyl-ACPs and long chain saturated and unsaturated beta-hydroxyacyl-ACPs.</text>
</comment>
<comment type="catalytic activity">
    <reaction evidence="1">
        <text>a (3R)-hydroxyacyl-[ACP] = a (2E)-enoyl-[ACP] + H2O</text>
        <dbReference type="Rhea" id="RHEA:13097"/>
        <dbReference type="Rhea" id="RHEA-COMP:9925"/>
        <dbReference type="Rhea" id="RHEA-COMP:9945"/>
        <dbReference type="ChEBI" id="CHEBI:15377"/>
        <dbReference type="ChEBI" id="CHEBI:78784"/>
        <dbReference type="ChEBI" id="CHEBI:78827"/>
        <dbReference type="EC" id="4.2.1.59"/>
    </reaction>
</comment>
<comment type="subcellular location">
    <subcellularLocation>
        <location evidence="1">Cytoplasm</location>
    </subcellularLocation>
</comment>
<comment type="similarity">
    <text evidence="1">Belongs to the thioester dehydratase family. FabZ subfamily.</text>
</comment>
<feature type="chain" id="PRO_0000091640" description="3-hydroxyacyl-[acyl-carrier-protein] dehydratase FabZ">
    <location>
        <begin position="1"/>
        <end position="144"/>
    </location>
</feature>
<feature type="active site" evidence="1">
    <location>
        <position position="48"/>
    </location>
</feature>
<dbReference type="EC" id="4.2.1.59" evidence="1"/>
<dbReference type="EMBL" id="AE017333">
    <property type="protein sequence ID" value="AAU42688.1"/>
    <property type="molecule type" value="Genomic_DNA"/>
</dbReference>
<dbReference type="EMBL" id="CP000002">
    <property type="protein sequence ID" value="AAU25313.1"/>
    <property type="molecule type" value="Genomic_DNA"/>
</dbReference>
<dbReference type="RefSeq" id="WP_003185902.1">
    <property type="nucleotide sequence ID" value="NC_006322.1"/>
</dbReference>
<dbReference type="SMR" id="Q65E26"/>
<dbReference type="STRING" id="279010.BL02496"/>
<dbReference type="GeneID" id="92859552"/>
<dbReference type="KEGG" id="bld:BLi03873"/>
<dbReference type="KEGG" id="bli:BL02496"/>
<dbReference type="eggNOG" id="COG0764">
    <property type="taxonomic scope" value="Bacteria"/>
</dbReference>
<dbReference type="HOGENOM" id="CLU_078912_3_0_9"/>
<dbReference type="Proteomes" id="UP000000606">
    <property type="component" value="Chromosome"/>
</dbReference>
<dbReference type="GO" id="GO:0005737">
    <property type="term" value="C:cytoplasm"/>
    <property type="evidence" value="ECO:0007669"/>
    <property type="project" value="UniProtKB-SubCell"/>
</dbReference>
<dbReference type="GO" id="GO:0016020">
    <property type="term" value="C:membrane"/>
    <property type="evidence" value="ECO:0007669"/>
    <property type="project" value="GOC"/>
</dbReference>
<dbReference type="GO" id="GO:0019171">
    <property type="term" value="F:(3R)-hydroxyacyl-[acyl-carrier-protein] dehydratase activity"/>
    <property type="evidence" value="ECO:0007669"/>
    <property type="project" value="UniProtKB-EC"/>
</dbReference>
<dbReference type="GO" id="GO:0006633">
    <property type="term" value="P:fatty acid biosynthetic process"/>
    <property type="evidence" value="ECO:0007669"/>
    <property type="project" value="UniProtKB-UniRule"/>
</dbReference>
<dbReference type="GO" id="GO:0009245">
    <property type="term" value="P:lipid A biosynthetic process"/>
    <property type="evidence" value="ECO:0007669"/>
    <property type="project" value="UniProtKB-UniRule"/>
</dbReference>
<dbReference type="CDD" id="cd01288">
    <property type="entry name" value="FabZ"/>
    <property type="match status" value="1"/>
</dbReference>
<dbReference type="FunFam" id="3.10.129.10:FF:000001">
    <property type="entry name" value="3-hydroxyacyl-[acyl-carrier-protein] dehydratase FabZ"/>
    <property type="match status" value="1"/>
</dbReference>
<dbReference type="Gene3D" id="3.10.129.10">
    <property type="entry name" value="Hotdog Thioesterase"/>
    <property type="match status" value="1"/>
</dbReference>
<dbReference type="HAMAP" id="MF_00406">
    <property type="entry name" value="FabZ"/>
    <property type="match status" value="1"/>
</dbReference>
<dbReference type="InterPro" id="IPR013114">
    <property type="entry name" value="FabA_FabZ"/>
</dbReference>
<dbReference type="InterPro" id="IPR010084">
    <property type="entry name" value="FabZ"/>
</dbReference>
<dbReference type="InterPro" id="IPR029069">
    <property type="entry name" value="HotDog_dom_sf"/>
</dbReference>
<dbReference type="NCBIfam" id="TIGR01750">
    <property type="entry name" value="fabZ"/>
    <property type="match status" value="1"/>
</dbReference>
<dbReference type="NCBIfam" id="NF000582">
    <property type="entry name" value="PRK00006.1"/>
    <property type="match status" value="1"/>
</dbReference>
<dbReference type="PANTHER" id="PTHR30272">
    <property type="entry name" value="3-HYDROXYACYL-[ACYL-CARRIER-PROTEIN] DEHYDRATASE"/>
    <property type="match status" value="1"/>
</dbReference>
<dbReference type="PANTHER" id="PTHR30272:SF1">
    <property type="entry name" value="3-HYDROXYACYL-[ACYL-CARRIER-PROTEIN] DEHYDRATASE"/>
    <property type="match status" value="1"/>
</dbReference>
<dbReference type="Pfam" id="PF07977">
    <property type="entry name" value="FabA"/>
    <property type="match status" value="1"/>
</dbReference>
<dbReference type="SUPFAM" id="SSF54637">
    <property type="entry name" value="Thioesterase/thiol ester dehydrase-isomerase"/>
    <property type="match status" value="1"/>
</dbReference>
<proteinExistence type="inferred from homology"/>
<keyword id="KW-0963">Cytoplasm</keyword>
<keyword id="KW-0441">Lipid A biosynthesis</keyword>
<keyword id="KW-0444">Lipid biosynthesis</keyword>
<keyword id="KW-0443">Lipid metabolism</keyword>
<keyword id="KW-0456">Lyase</keyword>
<keyword id="KW-1185">Reference proteome</keyword>